<name>URE3_MYCA9</name>
<keyword id="KW-0963">Cytoplasm</keyword>
<keyword id="KW-0378">Hydrolase</keyword>
<keyword id="KW-1185">Reference proteome</keyword>
<gene>
    <name evidence="1" type="primary">ureA</name>
    <name type="ordered locus">MAB_2423</name>
</gene>
<dbReference type="EC" id="3.5.1.5" evidence="1"/>
<dbReference type="EMBL" id="CU458896">
    <property type="protein sequence ID" value="CAM62504.1"/>
    <property type="molecule type" value="Genomic_DNA"/>
</dbReference>
<dbReference type="RefSeq" id="WP_005058500.1">
    <property type="nucleotide sequence ID" value="NZ_MLCG01000006.1"/>
</dbReference>
<dbReference type="SMR" id="B1MB83"/>
<dbReference type="GeneID" id="93379362"/>
<dbReference type="KEGG" id="mab:MAB_2423"/>
<dbReference type="UniPathway" id="UPA00258">
    <property type="reaction ID" value="UER00370"/>
</dbReference>
<dbReference type="Proteomes" id="UP000007137">
    <property type="component" value="Chromosome"/>
</dbReference>
<dbReference type="GO" id="GO:0005737">
    <property type="term" value="C:cytoplasm"/>
    <property type="evidence" value="ECO:0007669"/>
    <property type="project" value="UniProtKB-SubCell"/>
</dbReference>
<dbReference type="GO" id="GO:0016151">
    <property type="term" value="F:nickel cation binding"/>
    <property type="evidence" value="ECO:0007669"/>
    <property type="project" value="InterPro"/>
</dbReference>
<dbReference type="GO" id="GO:0009039">
    <property type="term" value="F:urease activity"/>
    <property type="evidence" value="ECO:0007669"/>
    <property type="project" value="UniProtKB-UniRule"/>
</dbReference>
<dbReference type="GO" id="GO:0043419">
    <property type="term" value="P:urea catabolic process"/>
    <property type="evidence" value="ECO:0007669"/>
    <property type="project" value="UniProtKB-UniRule"/>
</dbReference>
<dbReference type="CDD" id="cd00390">
    <property type="entry name" value="Urease_gamma"/>
    <property type="match status" value="1"/>
</dbReference>
<dbReference type="Gene3D" id="3.30.280.10">
    <property type="entry name" value="Urease, gamma-like subunit"/>
    <property type="match status" value="1"/>
</dbReference>
<dbReference type="HAMAP" id="MF_00739">
    <property type="entry name" value="Urease_gamma"/>
    <property type="match status" value="1"/>
</dbReference>
<dbReference type="InterPro" id="IPR012010">
    <property type="entry name" value="Urease_gamma"/>
</dbReference>
<dbReference type="InterPro" id="IPR002026">
    <property type="entry name" value="Urease_gamma/gamma-beta_su"/>
</dbReference>
<dbReference type="InterPro" id="IPR036463">
    <property type="entry name" value="Urease_gamma_sf"/>
</dbReference>
<dbReference type="InterPro" id="IPR050069">
    <property type="entry name" value="Urease_subunit"/>
</dbReference>
<dbReference type="NCBIfam" id="NF009712">
    <property type="entry name" value="PRK13241.1"/>
    <property type="match status" value="1"/>
</dbReference>
<dbReference type="NCBIfam" id="TIGR00193">
    <property type="entry name" value="urease_gam"/>
    <property type="match status" value="1"/>
</dbReference>
<dbReference type="PANTHER" id="PTHR33569">
    <property type="entry name" value="UREASE"/>
    <property type="match status" value="1"/>
</dbReference>
<dbReference type="PANTHER" id="PTHR33569:SF1">
    <property type="entry name" value="UREASE"/>
    <property type="match status" value="1"/>
</dbReference>
<dbReference type="Pfam" id="PF00547">
    <property type="entry name" value="Urease_gamma"/>
    <property type="match status" value="1"/>
</dbReference>
<dbReference type="PIRSF" id="PIRSF001223">
    <property type="entry name" value="Urease_gamma"/>
    <property type="match status" value="1"/>
</dbReference>
<dbReference type="SUPFAM" id="SSF54111">
    <property type="entry name" value="Urease, gamma-subunit"/>
    <property type="match status" value="1"/>
</dbReference>
<organism>
    <name type="scientific">Mycobacteroides abscessus (strain ATCC 19977 / DSM 44196 / CCUG 20993 / CIP 104536 / JCM 13569 / NCTC 13031 / TMC 1543 / L948)</name>
    <name type="common">Mycobacterium abscessus</name>
    <dbReference type="NCBI Taxonomy" id="561007"/>
    <lineage>
        <taxon>Bacteria</taxon>
        <taxon>Bacillati</taxon>
        <taxon>Actinomycetota</taxon>
        <taxon>Actinomycetes</taxon>
        <taxon>Mycobacteriales</taxon>
        <taxon>Mycobacteriaceae</taxon>
        <taxon>Mycobacteroides</taxon>
        <taxon>Mycobacteroides abscessus</taxon>
    </lineage>
</organism>
<comment type="catalytic activity">
    <reaction evidence="1">
        <text>urea + 2 H2O + H(+) = hydrogencarbonate + 2 NH4(+)</text>
        <dbReference type="Rhea" id="RHEA:20557"/>
        <dbReference type="ChEBI" id="CHEBI:15377"/>
        <dbReference type="ChEBI" id="CHEBI:15378"/>
        <dbReference type="ChEBI" id="CHEBI:16199"/>
        <dbReference type="ChEBI" id="CHEBI:17544"/>
        <dbReference type="ChEBI" id="CHEBI:28938"/>
        <dbReference type="EC" id="3.5.1.5"/>
    </reaction>
</comment>
<comment type="pathway">
    <text evidence="1">Nitrogen metabolism; urea degradation; CO(2) and NH(3) from urea (urease route): step 1/1.</text>
</comment>
<comment type="subunit">
    <text evidence="1">Heterotrimer of UreA (gamma), UreB (beta) and UreC (alpha) subunits. Three heterotrimers associate to form the active enzyme.</text>
</comment>
<comment type="subcellular location">
    <subcellularLocation>
        <location evidence="1">Cytoplasm</location>
    </subcellularLocation>
</comment>
<comment type="similarity">
    <text evidence="1">Belongs to the urease gamma subunit family.</text>
</comment>
<reference key="1">
    <citation type="journal article" date="2009" name="PLoS ONE">
        <title>Non mycobacterial virulence genes in the genome of the emerging pathogen Mycobacterium abscessus.</title>
        <authorList>
            <person name="Ripoll F."/>
            <person name="Pasek S."/>
            <person name="Schenowitz C."/>
            <person name="Dossat C."/>
            <person name="Barbe V."/>
            <person name="Rottman M."/>
            <person name="Macheras E."/>
            <person name="Heym B."/>
            <person name="Herrmann J.L."/>
            <person name="Daffe M."/>
            <person name="Brosch R."/>
            <person name="Risler J.L."/>
            <person name="Gaillard J.L."/>
        </authorList>
    </citation>
    <scope>NUCLEOTIDE SEQUENCE [LARGE SCALE GENOMIC DNA]</scope>
    <source>
        <strain>ATCC 19977 / DSM 44196 / CCUG 20993 / CIP 104536 / JCM 13569 / NCTC 13031 / TMC 1543 / L948</strain>
    </source>
</reference>
<evidence type="ECO:0000255" key="1">
    <source>
        <dbReference type="HAMAP-Rule" id="MF_00739"/>
    </source>
</evidence>
<proteinExistence type="inferred from homology"/>
<accession>B1MB83</accession>
<protein>
    <recommendedName>
        <fullName evidence="1">Urease subunit gamma</fullName>
        <ecNumber evidence="1">3.5.1.5</ecNumber>
    </recommendedName>
    <alternativeName>
        <fullName evidence="1">Urea amidohydrolase subunit gamma</fullName>
    </alternativeName>
</protein>
<feature type="chain" id="PRO_1000199871" description="Urease subunit gamma">
    <location>
        <begin position="1"/>
        <end position="100"/>
    </location>
</feature>
<sequence>MRLTPHEQERLLISYAAELARRRRSRGLLLNHPEAIAIITDHLLEGARDGRTVAELMVSGREVLGRDDVMDGVPEMIPDVQVEATFPDGTKLVTVHHPIG</sequence>